<organism>
    <name type="scientific">Klebsiella pneumoniae (strain 342)</name>
    <dbReference type="NCBI Taxonomy" id="507522"/>
    <lineage>
        <taxon>Bacteria</taxon>
        <taxon>Pseudomonadati</taxon>
        <taxon>Pseudomonadota</taxon>
        <taxon>Gammaproteobacteria</taxon>
        <taxon>Enterobacterales</taxon>
        <taxon>Enterobacteriaceae</taxon>
        <taxon>Klebsiella/Raoultella group</taxon>
        <taxon>Klebsiella</taxon>
        <taxon>Klebsiella pneumoniae complex</taxon>
    </lineage>
</organism>
<proteinExistence type="inferred from homology"/>
<accession>B5XN83</accession>
<keyword id="KW-0963">Cytoplasm</keyword>
<keyword id="KW-0819">tRNA processing</keyword>
<comment type="function">
    <text evidence="1">Part of a sulfur-relay system required for 2-thiolation of 5-methylaminomethyl-2-thiouridine (mnm(5)s(2)U) at tRNA wobble positions.</text>
</comment>
<comment type="subunit">
    <text evidence="1">Heterohexamer, formed by a dimer of trimers. The hexameric TusBCD complex contains 2 copies each of TusB, TusC and TusD. The TusBCD complex interacts with TusE.</text>
</comment>
<comment type="subcellular location">
    <subcellularLocation>
        <location evidence="1">Cytoplasm</location>
    </subcellularLocation>
</comment>
<comment type="similarity">
    <text evidence="1">Belongs to the DsrF/TusC family.</text>
</comment>
<protein>
    <recommendedName>
        <fullName evidence="1">Protein TusC</fullName>
    </recommendedName>
    <alternativeName>
        <fullName evidence="1">tRNA 2-thiouridine synthesizing protein C</fullName>
    </alternativeName>
</protein>
<name>TUSC_KLEP3</name>
<feature type="chain" id="PRO_1000122843" description="Protein TusC">
    <location>
        <begin position="1"/>
        <end position="119"/>
    </location>
</feature>
<gene>
    <name evidence="1" type="primary">tusC</name>
    <name type="ordered locus">KPK_0388</name>
</gene>
<dbReference type="EMBL" id="CP000964">
    <property type="protein sequence ID" value="ACI08323.1"/>
    <property type="molecule type" value="Genomic_DNA"/>
</dbReference>
<dbReference type="SMR" id="B5XN83"/>
<dbReference type="KEGG" id="kpe:KPK_0388"/>
<dbReference type="HOGENOM" id="CLU_155943_1_0_6"/>
<dbReference type="Proteomes" id="UP000001734">
    <property type="component" value="Chromosome"/>
</dbReference>
<dbReference type="GO" id="GO:0005737">
    <property type="term" value="C:cytoplasm"/>
    <property type="evidence" value="ECO:0007669"/>
    <property type="project" value="UniProtKB-SubCell"/>
</dbReference>
<dbReference type="GO" id="GO:0008033">
    <property type="term" value="P:tRNA processing"/>
    <property type="evidence" value="ECO:0007669"/>
    <property type="project" value="UniProtKB-UniRule"/>
</dbReference>
<dbReference type="Gene3D" id="3.40.1260.10">
    <property type="entry name" value="DsrEFH-like"/>
    <property type="match status" value="1"/>
</dbReference>
<dbReference type="HAMAP" id="MF_00389">
    <property type="entry name" value="Thiourid_synth_C"/>
    <property type="match status" value="1"/>
</dbReference>
<dbReference type="InterPro" id="IPR027396">
    <property type="entry name" value="DsrEFH-like"/>
</dbReference>
<dbReference type="InterPro" id="IPR003787">
    <property type="entry name" value="Sulphur_relay_DsrE/F-like"/>
</dbReference>
<dbReference type="InterPro" id="IPR037450">
    <property type="entry name" value="Sulphur_relay_TusC"/>
</dbReference>
<dbReference type="InterPro" id="IPR017462">
    <property type="entry name" value="Sulphur_relay_TusC/DsrF"/>
</dbReference>
<dbReference type="NCBIfam" id="NF001238">
    <property type="entry name" value="PRK00211.1"/>
    <property type="match status" value="1"/>
</dbReference>
<dbReference type="NCBIfam" id="TIGR03010">
    <property type="entry name" value="sulf_tusC_dsrF"/>
    <property type="match status" value="1"/>
</dbReference>
<dbReference type="PANTHER" id="PTHR38780">
    <property type="entry name" value="PROTEIN TUSC"/>
    <property type="match status" value="1"/>
</dbReference>
<dbReference type="PANTHER" id="PTHR38780:SF1">
    <property type="entry name" value="PROTEIN TUSC"/>
    <property type="match status" value="1"/>
</dbReference>
<dbReference type="Pfam" id="PF02635">
    <property type="entry name" value="DsrE"/>
    <property type="match status" value="1"/>
</dbReference>
<dbReference type="SUPFAM" id="SSF75169">
    <property type="entry name" value="DsrEFH-like"/>
    <property type="match status" value="1"/>
</dbReference>
<evidence type="ECO:0000255" key="1">
    <source>
        <dbReference type="HAMAP-Rule" id="MF_00389"/>
    </source>
</evidence>
<reference key="1">
    <citation type="journal article" date="2008" name="PLoS Genet.">
        <title>Complete genome sequence of the N2-fixing broad host range endophyte Klebsiella pneumoniae 342 and virulence predictions verified in mice.</title>
        <authorList>
            <person name="Fouts D.E."/>
            <person name="Tyler H.L."/>
            <person name="DeBoy R.T."/>
            <person name="Daugherty S."/>
            <person name="Ren Q."/>
            <person name="Badger J.H."/>
            <person name="Durkin A.S."/>
            <person name="Huot H."/>
            <person name="Shrivastava S."/>
            <person name="Kothari S."/>
            <person name="Dodson R.J."/>
            <person name="Mohamoud Y."/>
            <person name="Khouri H."/>
            <person name="Roesch L.F.W."/>
            <person name="Krogfelt K.A."/>
            <person name="Struve C."/>
            <person name="Triplett E.W."/>
            <person name="Methe B.A."/>
        </authorList>
    </citation>
    <scope>NUCLEOTIDE SEQUENCE [LARGE SCALE GENOMIC DNA]</scope>
    <source>
        <strain>342</strain>
    </source>
</reference>
<sequence length="119" mass="13054">MKRVAFIFSSAPHGSAAGREGLDALLATSALTDEIGVFFVGDGVFQLLPDQRPGAVLARDYIATFKLLSLYDIDQCWLCADSARERGLDPATPWVVDVECLAPDALRARLHEFDVILRF</sequence>